<dbReference type="EC" id="2.1.1.182" evidence="1"/>
<dbReference type="EMBL" id="AE000783">
    <property type="protein sequence ID" value="AAB91517.1"/>
    <property type="molecule type" value="Genomic_DNA"/>
</dbReference>
<dbReference type="PIR" id="E70173">
    <property type="entry name" value="E70173"/>
</dbReference>
<dbReference type="RefSeq" id="NP_212724.1">
    <property type="nucleotide sequence ID" value="NC_001318.1"/>
</dbReference>
<dbReference type="RefSeq" id="WP_002656878.1">
    <property type="nucleotide sequence ID" value="NC_001318.1"/>
</dbReference>
<dbReference type="SMR" id="O51536"/>
<dbReference type="STRING" id="224326.BB_0590"/>
<dbReference type="PaxDb" id="224326-BB_0590"/>
<dbReference type="EnsemblBacteria" id="AAB91517">
    <property type="protein sequence ID" value="AAB91517"/>
    <property type="gene ID" value="BB_0590"/>
</dbReference>
<dbReference type="GeneID" id="56568023"/>
<dbReference type="KEGG" id="bbu:BB_0590"/>
<dbReference type="PATRIC" id="fig|224326.49.peg.981"/>
<dbReference type="HOGENOM" id="CLU_041220_0_1_12"/>
<dbReference type="OrthoDB" id="9814755at2"/>
<dbReference type="Proteomes" id="UP000001807">
    <property type="component" value="Chromosome"/>
</dbReference>
<dbReference type="GO" id="GO:0005829">
    <property type="term" value="C:cytosol"/>
    <property type="evidence" value="ECO:0007669"/>
    <property type="project" value="TreeGrafter"/>
</dbReference>
<dbReference type="GO" id="GO:0052908">
    <property type="term" value="F:16S rRNA (adenine(1518)-N(6)/adenine(1519)-N(6))-dimethyltransferase activity"/>
    <property type="evidence" value="ECO:0007669"/>
    <property type="project" value="UniProtKB-EC"/>
</dbReference>
<dbReference type="GO" id="GO:0003723">
    <property type="term" value="F:RNA binding"/>
    <property type="evidence" value="ECO:0007669"/>
    <property type="project" value="UniProtKB-KW"/>
</dbReference>
<dbReference type="CDD" id="cd02440">
    <property type="entry name" value="AdoMet_MTases"/>
    <property type="match status" value="1"/>
</dbReference>
<dbReference type="Gene3D" id="1.10.8.100">
    <property type="entry name" value="Ribosomal RNA adenine dimethylase-like, domain 2"/>
    <property type="match status" value="1"/>
</dbReference>
<dbReference type="Gene3D" id="3.40.50.150">
    <property type="entry name" value="Vaccinia Virus protein VP39"/>
    <property type="match status" value="1"/>
</dbReference>
<dbReference type="HAMAP" id="MF_00607">
    <property type="entry name" value="16SrRNA_methyltr_A"/>
    <property type="match status" value="1"/>
</dbReference>
<dbReference type="InterPro" id="IPR001737">
    <property type="entry name" value="KsgA/Erm"/>
</dbReference>
<dbReference type="InterPro" id="IPR023165">
    <property type="entry name" value="rRNA_Ade_diMease-like_C"/>
</dbReference>
<dbReference type="InterPro" id="IPR020596">
    <property type="entry name" value="rRNA_Ade_Mease_Trfase_CS"/>
</dbReference>
<dbReference type="InterPro" id="IPR020598">
    <property type="entry name" value="rRNA_Ade_methylase_Trfase_N"/>
</dbReference>
<dbReference type="InterPro" id="IPR011530">
    <property type="entry name" value="rRNA_adenine_dimethylase"/>
</dbReference>
<dbReference type="InterPro" id="IPR029063">
    <property type="entry name" value="SAM-dependent_MTases_sf"/>
</dbReference>
<dbReference type="NCBIfam" id="TIGR00755">
    <property type="entry name" value="ksgA"/>
    <property type="match status" value="1"/>
</dbReference>
<dbReference type="PANTHER" id="PTHR11727">
    <property type="entry name" value="DIMETHYLADENOSINE TRANSFERASE"/>
    <property type="match status" value="1"/>
</dbReference>
<dbReference type="PANTHER" id="PTHR11727:SF7">
    <property type="entry name" value="DIMETHYLADENOSINE TRANSFERASE-RELATED"/>
    <property type="match status" value="1"/>
</dbReference>
<dbReference type="Pfam" id="PF00398">
    <property type="entry name" value="RrnaAD"/>
    <property type="match status" value="1"/>
</dbReference>
<dbReference type="SMART" id="SM00650">
    <property type="entry name" value="rADc"/>
    <property type="match status" value="1"/>
</dbReference>
<dbReference type="SUPFAM" id="SSF53335">
    <property type="entry name" value="S-adenosyl-L-methionine-dependent methyltransferases"/>
    <property type="match status" value="1"/>
</dbReference>
<dbReference type="PROSITE" id="PS01131">
    <property type="entry name" value="RRNA_A_DIMETH"/>
    <property type="match status" value="1"/>
</dbReference>
<dbReference type="PROSITE" id="PS51689">
    <property type="entry name" value="SAM_RNA_A_N6_MT"/>
    <property type="match status" value="1"/>
</dbReference>
<accession>O51536</accession>
<feature type="chain" id="PRO_0000101492" description="Ribosomal RNA small subunit methyltransferase A">
    <location>
        <begin position="1"/>
        <end position="281"/>
    </location>
</feature>
<feature type="binding site" evidence="1">
    <location>
        <position position="36"/>
    </location>
    <ligand>
        <name>S-adenosyl-L-methionine</name>
        <dbReference type="ChEBI" id="CHEBI:59789"/>
    </ligand>
</feature>
<feature type="binding site" evidence="1">
    <location>
        <position position="38"/>
    </location>
    <ligand>
        <name>S-adenosyl-L-methionine</name>
        <dbReference type="ChEBI" id="CHEBI:59789"/>
    </ligand>
</feature>
<feature type="binding site" evidence="1">
    <location>
        <position position="63"/>
    </location>
    <ligand>
        <name>S-adenosyl-L-methionine</name>
        <dbReference type="ChEBI" id="CHEBI:59789"/>
    </ligand>
</feature>
<feature type="binding site" evidence="1">
    <location>
        <position position="84"/>
    </location>
    <ligand>
        <name>S-adenosyl-L-methionine</name>
        <dbReference type="ChEBI" id="CHEBI:59789"/>
    </ligand>
</feature>
<feature type="binding site" evidence="1">
    <location>
        <position position="109"/>
    </location>
    <ligand>
        <name>S-adenosyl-L-methionine</name>
        <dbReference type="ChEBI" id="CHEBI:59789"/>
    </ligand>
</feature>
<feature type="binding site" evidence="1">
    <location>
        <position position="127"/>
    </location>
    <ligand>
        <name>S-adenosyl-L-methionine</name>
        <dbReference type="ChEBI" id="CHEBI:59789"/>
    </ligand>
</feature>
<sequence>MILSLLSMNINYNSITSIKQTLKERKIAPRKLWGQNYLINESIRQKIIESLDIKENEKIWEIGPGLGAMTEILLKKTNLLTAFEIDLKYSEILNEKFGKLKNFKLIKGDFLKKYKNENQNIDKIFSNLPYNIASKVISKLIEENFLKEMVFTVQKELADRITAKINSKNYSSFTVLVQSHFKVIKILDIGENNFYPAPKVKSTTLKLIPKKNNIKNFKEFNKLVRTVFSNRRKKLKNTIINFITNKATLRENFLKEYLDKRPENISVEEFIQISNTLNAYH</sequence>
<organism>
    <name type="scientific">Borreliella burgdorferi (strain ATCC 35210 / DSM 4680 / CIP 102532 / B31)</name>
    <name type="common">Borrelia burgdorferi</name>
    <dbReference type="NCBI Taxonomy" id="224326"/>
    <lineage>
        <taxon>Bacteria</taxon>
        <taxon>Pseudomonadati</taxon>
        <taxon>Spirochaetota</taxon>
        <taxon>Spirochaetia</taxon>
        <taxon>Spirochaetales</taxon>
        <taxon>Borreliaceae</taxon>
        <taxon>Borreliella</taxon>
    </lineage>
</organism>
<comment type="function">
    <text evidence="1">Specifically dimethylates two adjacent adenosines (A1518 and A1519) in the loop of a conserved hairpin near the 3'-end of 16S rRNA in the 30S particle. May play a critical role in biogenesis of 30S subunits.</text>
</comment>
<comment type="catalytic activity">
    <reaction evidence="1">
        <text>adenosine(1518)/adenosine(1519) in 16S rRNA + 4 S-adenosyl-L-methionine = N(6)-dimethyladenosine(1518)/N(6)-dimethyladenosine(1519) in 16S rRNA + 4 S-adenosyl-L-homocysteine + 4 H(+)</text>
        <dbReference type="Rhea" id="RHEA:19609"/>
        <dbReference type="Rhea" id="RHEA-COMP:10232"/>
        <dbReference type="Rhea" id="RHEA-COMP:10233"/>
        <dbReference type="ChEBI" id="CHEBI:15378"/>
        <dbReference type="ChEBI" id="CHEBI:57856"/>
        <dbReference type="ChEBI" id="CHEBI:59789"/>
        <dbReference type="ChEBI" id="CHEBI:74411"/>
        <dbReference type="ChEBI" id="CHEBI:74493"/>
        <dbReference type="EC" id="2.1.1.182"/>
    </reaction>
</comment>
<comment type="subcellular location">
    <subcellularLocation>
        <location evidence="1">Cytoplasm</location>
    </subcellularLocation>
</comment>
<comment type="similarity">
    <text evidence="1">Belongs to the class I-like SAM-binding methyltransferase superfamily. rRNA adenine N(6)-methyltransferase family. RsmA subfamily.</text>
</comment>
<protein>
    <recommendedName>
        <fullName evidence="1">Ribosomal RNA small subunit methyltransferase A</fullName>
        <ecNumber evidence="1">2.1.1.182</ecNumber>
    </recommendedName>
    <alternativeName>
        <fullName evidence="1">16S rRNA (adenine(1518)-N(6)/adenine(1519)-N(6))-dimethyltransferase</fullName>
    </alternativeName>
    <alternativeName>
        <fullName evidence="1">16S rRNA dimethyladenosine transferase</fullName>
    </alternativeName>
    <alternativeName>
        <fullName evidence="1">16S rRNA dimethylase</fullName>
    </alternativeName>
    <alternativeName>
        <fullName evidence="1">S-adenosylmethionine-6-N', N'-adenosyl(rRNA) dimethyltransferase</fullName>
    </alternativeName>
</protein>
<evidence type="ECO:0000255" key="1">
    <source>
        <dbReference type="HAMAP-Rule" id="MF_00607"/>
    </source>
</evidence>
<keyword id="KW-0963">Cytoplasm</keyword>
<keyword id="KW-0489">Methyltransferase</keyword>
<keyword id="KW-1185">Reference proteome</keyword>
<keyword id="KW-0694">RNA-binding</keyword>
<keyword id="KW-0698">rRNA processing</keyword>
<keyword id="KW-0949">S-adenosyl-L-methionine</keyword>
<keyword id="KW-0808">Transferase</keyword>
<reference key="1">
    <citation type="journal article" date="1997" name="Nature">
        <title>Genomic sequence of a Lyme disease spirochaete, Borrelia burgdorferi.</title>
        <authorList>
            <person name="Fraser C.M."/>
            <person name="Casjens S."/>
            <person name="Huang W.M."/>
            <person name="Sutton G.G."/>
            <person name="Clayton R.A."/>
            <person name="Lathigra R."/>
            <person name="White O."/>
            <person name="Ketchum K.A."/>
            <person name="Dodson R.J."/>
            <person name="Hickey E.K."/>
            <person name="Gwinn M.L."/>
            <person name="Dougherty B.A."/>
            <person name="Tomb J.-F."/>
            <person name="Fleischmann R.D."/>
            <person name="Richardson D.L."/>
            <person name="Peterson J.D."/>
            <person name="Kerlavage A.R."/>
            <person name="Quackenbush J."/>
            <person name="Salzberg S.L."/>
            <person name="Hanson M."/>
            <person name="van Vugt R."/>
            <person name="Palmer N."/>
            <person name="Adams M.D."/>
            <person name="Gocayne J.D."/>
            <person name="Weidman J.F."/>
            <person name="Utterback T.R."/>
            <person name="Watthey L."/>
            <person name="McDonald L.A."/>
            <person name="Artiach P."/>
            <person name="Bowman C."/>
            <person name="Garland S.A."/>
            <person name="Fujii C."/>
            <person name="Cotton M.D."/>
            <person name="Horst K."/>
            <person name="Roberts K.M."/>
            <person name="Hatch B."/>
            <person name="Smith H.O."/>
            <person name="Venter J.C."/>
        </authorList>
    </citation>
    <scope>NUCLEOTIDE SEQUENCE [LARGE SCALE GENOMIC DNA]</scope>
    <source>
        <strain>ATCC 35210 / DSM 4680 / CIP 102532 / B31</strain>
    </source>
</reference>
<proteinExistence type="inferred from homology"/>
<gene>
    <name evidence="1" type="primary">rsmA</name>
    <name evidence="1" type="synonym">ksgA</name>
    <name type="ordered locus">BB_0590</name>
</gene>
<name>RSMA_BORBU</name>